<organism>
    <name type="scientific">Saccharomyces cerevisiae (strain ATCC 204508 / S288c)</name>
    <name type="common">Baker's yeast</name>
    <dbReference type="NCBI Taxonomy" id="559292"/>
    <lineage>
        <taxon>Eukaryota</taxon>
        <taxon>Fungi</taxon>
        <taxon>Dikarya</taxon>
        <taxon>Ascomycota</taxon>
        <taxon>Saccharomycotina</taxon>
        <taxon>Saccharomycetes</taxon>
        <taxon>Saccharomycetales</taxon>
        <taxon>Saccharomycetaceae</taxon>
        <taxon>Saccharomyces</taxon>
    </lineage>
</organism>
<sequence length="157" mass="18587">MSYKQYFDSLPLKLKSFFQRYPPSIKYSPVSTSTKAINANPFLPNKHPVTQRFHDPKYSLRRMSDVYKLALRYGVEEFLPPIENTKKLFFEEKYNKKTLMKGVLLPKGHKHELKLNEKLKKREEALKKVDELIASKKGSKYAKRVEKMKKNQSIGWF</sequence>
<evidence type="ECO:0000269" key="1">
    <source>
    </source>
</evidence>
<evidence type="ECO:0000269" key="2">
    <source>
    </source>
</evidence>
<evidence type="ECO:0000269" key="3">
    <source>
    </source>
</evidence>
<evidence type="ECO:0000269" key="4">
    <source>
    </source>
</evidence>
<evidence type="ECO:0000269" key="5">
    <source>
    </source>
</evidence>
<evidence type="ECO:0000269" key="6">
    <source>
    </source>
</evidence>
<evidence type="ECO:0000269" key="7">
    <source>
    </source>
</evidence>
<evidence type="ECO:0000269" key="8">
    <source>
    </source>
</evidence>
<evidence type="ECO:0000303" key="9">
    <source>
    </source>
</evidence>
<evidence type="ECO:0000305" key="10"/>
<evidence type="ECO:0000305" key="11">
    <source>
    </source>
</evidence>
<evidence type="ECO:0000305" key="12">
    <source>
    </source>
</evidence>
<reference key="1">
    <citation type="journal article" date="1991" name="Mol. Gen. Genet.">
        <title>Cloning and analysis of YMR26, the nuclear gene for a mitochondrial ribosomal protein in Saccharomyces cerevisiae.</title>
        <authorList>
            <person name="Kang W.K."/>
            <person name="Matsushita Y."/>
            <person name="Isono K."/>
        </authorList>
    </citation>
    <scope>NUCLEOTIDE SEQUENCE [GENOMIC DNA]</scope>
    <scope>PROTEIN SEQUENCE OF 2-27</scope>
    <source>
        <strain>ATCC 64665 / S288c / DC5</strain>
    </source>
</reference>
<reference key="2">
    <citation type="journal article" date="1997" name="Nature">
        <title>The nucleotide sequence of Saccharomyces cerevisiae chromosome VII.</title>
        <authorList>
            <person name="Tettelin H."/>
            <person name="Agostoni-Carbone M.L."/>
            <person name="Albermann K."/>
            <person name="Albers M."/>
            <person name="Arroyo J."/>
            <person name="Backes U."/>
            <person name="Barreiros T."/>
            <person name="Bertani I."/>
            <person name="Bjourson A.J."/>
            <person name="Brueckner M."/>
            <person name="Bruschi C.V."/>
            <person name="Carignani G."/>
            <person name="Castagnoli L."/>
            <person name="Cerdan E."/>
            <person name="Clemente M.L."/>
            <person name="Coblenz A."/>
            <person name="Coglievina M."/>
            <person name="Coissac E."/>
            <person name="Defoor E."/>
            <person name="Del Bino S."/>
            <person name="Delius H."/>
            <person name="Delneri D."/>
            <person name="de Wergifosse P."/>
            <person name="Dujon B."/>
            <person name="Durand P."/>
            <person name="Entian K.-D."/>
            <person name="Eraso P."/>
            <person name="Escribano V."/>
            <person name="Fabiani L."/>
            <person name="Fartmann B."/>
            <person name="Feroli F."/>
            <person name="Feuermann M."/>
            <person name="Frontali L."/>
            <person name="Garcia-Gonzalez M."/>
            <person name="Garcia-Saez M.I."/>
            <person name="Goffeau A."/>
            <person name="Guerreiro P."/>
            <person name="Hani J."/>
            <person name="Hansen M."/>
            <person name="Hebling U."/>
            <person name="Hernandez K."/>
            <person name="Heumann K."/>
            <person name="Hilger F."/>
            <person name="Hofmann B."/>
            <person name="Indge K.J."/>
            <person name="James C.M."/>
            <person name="Klima R."/>
            <person name="Koetter P."/>
            <person name="Kramer B."/>
            <person name="Kramer W."/>
            <person name="Lauquin G."/>
            <person name="Leuther H."/>
            <person name="Louis E.J."/>
            <person name="Maillier E."/>
            <person name="Marconi A."/>
            <person name="Martegani E."/>
            <person name="Mazon M.J."/>
            <person name="Mazzoni C."/>
            <person name="McReynolds A.D.K."/>
            <person name="Melchioretto P."/>
            <person name="Mewes H.-W."/>
            <person name="Minenkova O."/>
            <person name="Mueller-Auer S."/>
            <person name="Nawrocki A."/>
            <person name="Netter P."/>
            <person name="Neu R."/>
            <person name="Nombela C."/>
            <person name="Oliver S.G."/>
            <person name="Panzeri L."/>
            <person name="Paoluzi S."/>
            <person name="Plevani P."/>
            <person name="Portetelle D."/>
            <person name="Portillo F."/>
            <person name="Potier S."/>
            <person name="Purnelle B."/>
            <person name="Rieger M."/>
            <person name="Riles L."/>
            <person name="Rinaldi T."/>
            <person name="Robben J."/>
            <person name="Rodrigues-Pousada C."/>
            <person name="Rodriguez-Belmonte E."/>
            <person name="Rodriguez-Torres A.M."/>
            <person name="Rose M."/>
            <person name="Ruzzi M."/>
            <person name="Saliola M."/>
            <person name="Sanchez-Perez M."/>
            <person name="Schaefer B."/>
            <person name="Schaefer M."/>
            <person name="Scharfe M."/>
            <person name="Schmidheini T."/>
            <person name="Schreer A."/>
            <person name="Skala J."/>
            <person name="Souciet J.-L."/>
            <person name="Steensma H.Y."/>
            <person name="Talla E."/>
            <person name="Thierry A."/>
            <person name="Vandenbol M."/>
            <person name="van der Aart Q.J.M."/>
            <person name="Van Dyck L."/>
            <person name="Vanoni M."/>
            <person name="Verhasselt P."/>
            <person name="Voet M."/>
            <person name="Volckaert G."/>
            <person name="Wambutt R."/>
            <person name="Watson M.D."/>
            <person name="Weber N."/>
            <person name="Wedler E."/>
            <person name="Wedler H."/>
            <person name="Wipfli P."/>
            <person name="Wolf K."/>
            <person name="Wright L.F."/>
            <person name="Zaccaria P."/>
            <person name="Zimmermann M."/>
            <person name="Zollner A."/>
            <person name="Kleine K."/>
        </authorList>
    </citation>
    <scope>NUCLEOTIDE SEQUENCE [LARGE SCALE GENOMIC DNA]</scope>
    <source>
        <strain>ATCC 204508 / S288c</strain>
    </source>
</reference>
<reference key="3">
    <citation type="journal article" date="2014" name="G3 (Bethesda)">
        <title>The reference genome sequence of Saccharomyces cerevisiae: Then and now.</title>
        <authorList>
            <person name="Engel S.R."/>
            <person name="Dietrich F.S."/>
            <person name="Fisk D.G."/>
            <person name="Binkley G."/>
            <person name="Balakrishnan R."/>
            <person name="Costanzo M.C."/>
            <person name="Dwight S.S."/>
            <person name="Hitz B.C."/>
            <person name="Karra K."/>
            <person name="Nash R.S."/>
            <person name="Weng S."/>
            <person name="Wong E.D."/>
            <person name="Lloyd P."/>
            <person name="Skrzypek M.S."/>
            <person name="Miyasato S.R."/>
            <person name="Simison M."/>
            <person name="Cherry J.M."/>
        </authorList>
    </citation>
    <scope>GENOME REANNOTATION</scope>
    <source>
        <strain>ATCC 204508 / S288c</strain>
    </source>
</reference>
<reference key="4">
    <citation type="journal article" date="1991" name="FEBS Lett.">
        <title>Extended N-terminal sequencing of proteins of the large ribosomal subunit from yeast mitochondria.</title>
        <authorList>
            <person name="Grohmann L."/>
            <person name="Graack H.-R."/>
            <person name="Kruft V."/>
            <person name="Choli T."/>
            <person name="Goldschmidt-Reisin S."/>
            <person name="Kitakawa M."/>
        </authorList>
    </citation>
    <scope>PROTEIN SEQUENCE OF N-TERMINUS</scope>
    <scope>SUBUNIT</scope>
    <source>
        <strain>07173</strain>
    </source>
</reference>
<reference key="5">
    <citation type="journal article" date="2002" name="Eur. J. Biochem.">
        <title>Tag-mediated isolation of yeast mitochondrial ribosome and mass spectrometric identification of its new components.</title>
        <authorList>
            <person name="Gan X."/>
            <person name="Kitakawa M."/>
            <person name="Yoshino K."/>
            <person name="Oshiro N."/>
            <person name="Yonezawa K."/>
            <person name="Isono K."/>
        </authorList>
    </citation>
    <scope>IDENTIFICATION IN THE MITOCHONDRIAL RIBOSOMAL LARGE COMPLEX</scope>
    <scope>IDENTIFICATION BY MASS SPECTROMETRY</scope>
</reference>
<reference key="6">
    <citation type="journal article" date="2003" name="Nature">
        <title>Global analysis of protein localization in budding yeast.</title>
        <authorList>
            <person name="Huh W.-K."/>
            <person name="Falvo J.V."/>
            <person name="Gerke L.C."/>
            <person name="Carroll A.S."/>
            <person name="Howson R.W."/>
            <person name="Weissman J.S."/>
            <person name="O'Shea E.K."/>
        </authorList>
    </citation>
    <scope>SUBCELLULAR LOCATION [LARGE SCALE ANALYSIS]</scope>
</reference>
<reference key="7">
    <citation type="journal article" date="2003" name="Nature">
        <title>Global analysis of protein expression in yeast.</title>
        <authorList>
            <person name="Ghaemmaghami S."/>
            <person name="Huh W.-K."/>
            <person name="Bower K."/>
            <person name="Howson R.W."/>
            <person name="Belle A."/>
            <person name="Dephoure N."/>
            <person name="O'Shea E.K."/>
            <person name="Weissman J.S."/>
        </authorList>
    </citation>
    <scope>LEVEL OF PROTEIN EXPRESSION [LARGE SCALE ANALYSIS]</scope>
</reference>
<reference key="8">
    <citation type="journal article" date="2003" name="Proc. Natl. Acad. Sci. U.S.A.">
        <title>The proteome of Saccharomyces cerevisiae mitochondria.</title>
        <authorList>
            <person name="Sickmann A."/>
            <person name="Reinders J."/>
            <person name="Wagner Y."/>
            <person name="Joppich C."/>
            <person name="Zahedi R.P."/>
            <person name="Meyer H.E."/>
            <person name="Schoenfisch B."/>
            <person name="Perschil I."/>
            <person name="Chacinska A."/>
            <person name="Guiard B."/>
            <person name="Rehling P."/>
            <person name="Pfanner N."/>
            <person name="Meisinger C."/>
        </authorList>
    </citation>
    <scope>SUBCELLULAR LOCATION [LARGE SCALE ANALYSIS]</scope>
    <source>
        <strain>ATCC 76625 / YPH499</strain>
    </source>
</reference>
<reference key="9">
    <citation type="journal article" date="2015" name="Nat. Commun.">
        <title>Organization of the mitochondrial translation machinery studied in situ by cryoelectron tomography.</title>
        <authorList>
            <person name="Pfeffer S."/>
            <person name="Woellhaf M.W."/>
            <person name="Herrmann J.M."/>
            <person name="Forster F."/>
        </authorList>
    </citation>
    <scope>SUBCELLULAR LOCATION</scope>
</reference>
<reference key="10">
    <citation type="journal article" date="2014" name="Science">
        <title>Structure of the yeast mitochondrial large ribosomal subunit.</title>
        <authorList>
            <person name="Amunts A."/>
            <person name="Brown A."/>
            <person name="Bai X.C."/>
            <person name="Llacer J.L."/>
            <person name="Hussain T."/>
            <person name="Emsley P."/>
            <person name="Long F."/>
            <person name="Murshudov G."/>
            <person name="Scheres S.H."/>
            <person name="Ramakrishnan V."/>
        </authorList>
    </citation>
    <scope>STRUCTURE BY ELECTRON MICROSCOPY (3.20 ANGSTROMS)</scope>
    <scope>SUBUNIT</scope>
</reference>
<protein>
    <recommendedName>
        <fullName evidence="9">Large ribosomal subunit protein mL59</fullName>
    </recommendedName>
    <alternativeName>
        <fullName>54S ribosomal protein L25, mitochondrial</fullName>
    </alternativeName>
    <alternativeName>
        <fullName>YmL25</fullName>
    </alternativeName>
</protein>
<name>RM25_YEAST</name>
<dbReference type="EMBL" id="X56106">
    <property type="protein sequence ID" value="CAA39582.1"/>
    <property type="molecule type" value="Genomic_DNA"/>
</dbReference>
<dbReference type="EMBL" id="Z72861">
    <property type="protein sequence ID" value="CAA97078.1"/>
    <property type="molecule type" value="Genomic_DNA"/>
</dbReference>
<dbReference type="EMBL" id="BK006941">
    <property type="protein sequence ID" value="DAA08169.1"/>
    <property type="molecule type" value="Genomic_DNA"/>
</dbReference>
<dbReference type="PIR" id="S14050">
    <property type="entry name" value="S14050"/>
</dbReference>
<dbReference type="RefSeq" id="NP_011590.1">
    <property type="nucleotide sequence ID" value="NM_001181205.1"/>
</dbReference>
<dbReference type="PDB" id="3J6B">
    <property type="method" value="EM"/>
    <property type="resolution" value="3.20 A"/>
    <property type="chains" value="b=1-157"/>
</dbReference>
<dbReference type="PDB" id="5MRC">
    <property type="method" value="EM"/>
    <property type="resolution" value="3.25 A"/>
    <property type="chains" value="b=3-157"/>
</dbReference>
<dbReference type="PDB" id="5MRE">
    <property type="method" value="EM"/>
    <property type="resolution" value="3.75 A"/>
    <property type="chains" value="b=3-157"/>
</dbReference>
<dbReference type="PDB" id="5MRF">
    <property type="method" value="EM"/>
    <property type="resolution" value="4.97 A"/>
    <property type="chains" value="b=3-157"/>
</dbReference>
<dbReference type="PDBsum" id="3J6B"/>
<dbReference type="PDBsum" id="5MRC"/>
<dbReference type="PDBsum" id="5MRE"/>
<dbReference type="PDBsum" id="5MRF"/>
<dbReference type="EMDB" id="EMD-3551"/>
<dbReference type="EMDB" id="EMD-3552"/>
<dbReference type="EMDB" id="EMD-3553"/>
<dbReference type="SMR" id="P23369"/>
<dbReference type="BioGRID" id="33318">
    <property type="interactions" value="137"/>
</dbReference>
<dbReference type="ComplexPortal" id="CPX-1602">
    <property type="entry name" value="54S mitochondrial large ribosomal subunit"/>
</dbReference>
<dbReference type="DIP" id="DIP-6803N"/>
<dbReference type="FunCoup" id="P23369">
    <property type="interactions" value="143"/>
</dbReference>
<dbReference type="IntAct" id="P23369">
    <property type="interactions" value="63"/>
</dbReference>
<dbReference type="MINT" id="P23369"/>
<dbReference type="STRING" id="4932.YGR076C"/>
<dbReference type="iPTMnet" id="P23369"/>
<dbReference type="PaxDb" id="4932-YGR076C"/>
<dbReference type="PeptideAtlas" id="P23369"/>
<dbReference type="EnsemblFungi" id="YGR076C_mRNA">
    <property type="protein sequence ID" value="YGR076C"/>
    <property type="gene ID" value="YGR076C"/>
</dbReference>
<dbReference type="GeneID" id="852967"/>
<dbReference type="KEGG" id="sce:YGR076C"/>
<dbReference type="AGR" id="SGD:S000003308"/>
<dbReference type="SGD" id="S000003308">
    <property type="gene designation" value="MRPL25"/>
</dbReference>
<dbReference type="VEuPathDB" id="FungiDB:YGR076C"/>
<dbReference type="eggNOG" id="ENOG502S29G">
    <property type="taxonomic scope" value="Eukaryota"/>
</dbReference>
<dbReference type="HOGENOM" id="CLU_076154_2_0_1"/>
<dbReference type="InParanoid" id="P23369"/>
<dbReference type="OMA" id="KGHKHEL"/>
<dbReference type="OrthoDB" id="18529at2759"/>
<dbReference type="BioCyc" id="YEAST:G3O-30788-MONOMER"/>
<dbReference type="BioGRID-ORCS" id="852967">
    <property type="hits" value="4 hits in 10 CRISPR screens"/>
</dbReference>
<dbReference type="PRO" id="PR:P23369"/>
<dbReference type="Proteomes" id="UP000002311">
    <property type="component" value="Chromosome VII"/>
</dbReference>
<dbReference type="RNAct" id="P23369">
    <property type="molecule type" value="protein"/>
</dbReference>
<dbReference type="GO" id="GO:0005743">
    <property type="term" value="C:mitochondrial inner membrane"/>
    <property type="evidence" value="ECO:0000303"/>
    <property type="project" value="ComplexPortal"/>
</dbReference>
<dbReference type="GO" id="GO:0005762">
    <property type="term" value="C:mitochondrial large ribosomal subunit"/>
    <property type="evidence" value="ECO:0000314"/>
    <property type="project" value="SGD"/>
</dbReference>
<dbReference type="GO" id="GO:0005739">
    <property type="term" value="C:mitochondrion"/>
    <property type="evidence" value="ECO:0007005"/>
    <property type="project" value="SGD"/>
</dbReference>
<dbReference type="GO" id="GO:0003735">
    <property type="term" value="F:structural constituent of ribosome"/>
    <property type="evidence" value="ECO:0000314"/>
    <property type="project" value="SGD"/>
</dbReference>
<dbReference type="GO" id="GO:0032543">
    <property type="term" value="P:mitochondrial translation"/>
    <property type="evidence" value="ECO:0000303"/>
    <property type="project" value="ComplexPortal"/>
</dbReference>
<dbReference type="InterPro" id="IPR037507">
    <property type="entry name" value="Ribosomal_mL59"/>
</dbReference>
<dbReference type="InterPro" id="IPR040922">
    <property type="entry name" value="Ribosomal_mL59_dom"/>
</dbReference>
<dbReference type="PANTHER" id="PTHR28041">
    <property type="entry name" value="54S RIBOSOMAL PROTEIN L25, MITOCHONDRIAL"/>
    <property type="match status" value="1"/>
</dbReference>
<dbReference type="PANTHER" id="PTHR28041:SF1">
    <property type="entry name" value="LARGE RIBOSOMAL SUBUNIT PROTEIN ML59"/>
    <property type="match status" value="1"/>
</dbReference>
<dbReference type="Pfam" id="PF18126">
    <property type="entry name" value="Mitoc_mL59"/>
    <property type="match status" value="1"/>
</dbReference>
<gene>
    <name type="primary">MRPL25</name>
    <name type="synonym">YMR26</name>
    <name type="ordered locus">YGR076C</name>
</gene>
<comment type="function">
    <text evidence="11 12">Component of the mitochondrial ribosome (mitoribosome), a dedicated translation machinery responsible for the synthesis of mitochondrial genome-encoded proteins, including at least some of the essential transmembrane subunits of the mitochondrial respiratory chain. The mitoribosomes are attached to the mitochondrial inner membrane and translation products are cotranslationally integrated into the membrane.</text>
</comment>
<comment type="subunit">
    <text evidence="1 6 7">Component of the mitochondrial large ribosomal subunit (mt-LSU). Mature yeast 74S mitochondrial ribosomes consist of a small (37S) and a large (54S) subunit. The 37S small subunit contains a 15S ribosomal RNA (15S mt-rRNA) and 34 different proteins. The 54S large subunit contains a 21S rRNA (21S mt-rRNA) and 46 different proteins.</text>
</comment>
<comment type="subcellular location">
    <subcellularLocation>
        <location evidence="2 4">Mitochondrion</location>
    </subcellularLocation>
    <text evidence="8">Mitoribosomes are tethered to the mitochondrial inner membrane and spatially aligned with the membrane insertion machinery through two distinct membrane contact sites, formed by the 21S rRNA expansion segment 96-ES1 and the inner membrane protein MBA1.</text>
</comment>
<comment type="miscellaneous">
    <text evidence="3">Present with 1550 molecules/cell in log phase SD medium.</text>
</comment>
<comment type="similarity">
    <text evidence="10">Belongs to the mitochondrion-specific ribosomal protein mL59 family.</text>
</comment>
<feature type="initiator methionine" description="Removed" evidence="5">
    <location>
        <position position="1"/>
    </location>
</feature>
<feature type="chain" id="PRO_0000087690" description="Large ribosomal subunit protein mL59">
    <location>
        <begin position="2"/>
        <end position="157"/>
    </location>
</feature>
<feature type="sequence conflict" description="In Ref. 1; AA sequence." evidence="10" ref="1">
    <original>L</original>
    <variation>V</variation>
    <location>
        <position position="14"/>
    </location>
</feature>
<feature type="sequence conflict" description="In Ref. 1; AA sequence." evidence="10" ref="1">
    <original>Y</original>
    <variation>K</variation>
    <location>
        <position position="27"/>
    </location>
</feature>
<keyword id="KW-0002">3D-structure</keyword>
<keyword id="KW-0903">Direct protein sequencing</keyword>
<keyword id="KW-0496">Mitochondrion</keyword>
<keyword id="KW-1185">Reference proteome</keyword>
<keyword id="KW-0687">Ribonucleoprotein</keyword>
<keyword id="KW-0689">Ribosomal protein</keyword>
<accession>P23369</accession>
<accession>D6VUK8</accession>
<proteinExistence type="evidence at protein level"/>